<name>ERA_CLOBH</name>
<sequence length="296" mass="34090">MFKSGFVTIVGRPNVGKSTLLNAIMKEKLSIVSCRPQTTRNNIQTILTEDNYQLVFVDTPGIHKPKHKLGEYMVKSASEAMKDVDLVLFLINPDEKPGRGDLFIIEQLKEVKVPVFLVLNKIDENPQEKVAETLKTYSELMEFEEIIPISALKGKNIDLLKELMFKYIPEGPQYYPEDMIIDQNERFIVAEIVREKALRLLSEEVPHGIAVEILQMKKNEKGTYHIEGNILCEKNSHKPIIIGKGGSKLKKISQYARQDIEAFLQSKVYIRLWVKVKEEWRDNQSLLKELGYKNMK</sequence>
<protein>
    <recommendedName>
        <fullName evidence="1">GTPase Era</fullName>
    </recommendedName>
</protein>
<dbReference type="EMBL" id="CP000727">
    <property type="protein sequence ID" value="ABS38399.1"/>
    <property type="molecule type" value="Genomic_DNA"/>
</dbReference>
<dbReference type="EMBL" id="AM412317">
    <property type="protein sequence ID" value="CAL84508.1"/>
    <property type="molecule type" value="Genomic_DNA"/>
</dbReference>
<dbReference type="RefSeq" id="WP_012047995.1">
    <property type="nucleotide sequence ID" value="NC_009698.1"/>
</dbReference>
<dbReference type="RefSeq" id="YP_001255438.1">
    <property type="nucleotide sequence ID" value="NC_009495.1"/>
</dbReference>
<dbReference type="RefSeq" id="YP_001388674.1">
    <property type="nucleotide sequence ID" value="NC_009698.1"/>
</dbReference>
<dbReference type="SMR" id="A5I626"/>
<dbReference type="GeneID" id="5185003"/>
<dbReference type="KEGG" id="cbh:CLC_2841"/>
<dbReference type="KEGG" id="cbo:CBO2946"/>
<dbReference type="PATRIC" id="fig|413999.7.peg.2924"/>
<dbReference type="HOGENOM" id="CLU_038009_1_0_9"/>
<dbReference type="PRO" id="PR:A5I626"/>
<dbReference type="Proteomes" id="UP000001986">
    <property type="component" value="Chromosome"/>
</dbReference>
<dbReference type="GO" id="GO:0005829">
    <property type="term" value="C:cytosol"/>
    <property type="evidence" value="ECO:0000318"/>
    <property type="project" value="GO_Central"/>
</dbReference>
<dbReference type="GO" id="GO:0005886">
    <property type="term" value="C:plasma membrane"/>
    <property type="evidence" value="ECO:0007669"/>
    <property type="project" value="UniProtKB-SubCell"/>
</dbReference>
<dbReference type="GO" id="GO:0005525">
    <property type="term" value="F:GTP binding"/>
    <property type="evidence" value="ECO:0007669"/>
    <property type="project" value="UniProtKB-UniRule"/>
</dbReference>
<dbReference type="GO" id="GO:0003924">
    <property type="term" value="F:GTPase activity"/>
    <property type="evidence" value="ECO:0007669"/>
    <property type="project" value="UniProtKB-UniRule"/>
</dbReference>
<dbReference type="GO" id="GO:0043024">
    <property type="term" value="F:ribosomal small subunit binding"/>
    <property type="evidence" value="ECO:0000318"/>
    <property type="project" value="GO_Central"/>
</dbReference>
<dbReference type="GO" id="GO:0019843">
    <property type="term" value="F:rRNA binding"/>
    <property type="evidence" value="ECO:0000318"/>
    <property type="project" value="GO_Central"/>
</dbReference>
<dbReference type="GO" id="GO:0070181">
    <property type="term" value="F:small ribosomal subunit rRNA binding"/>
    <property type="evidence" value="ECO:0007669"/>
    <property type="project" value="UniProtKB-UniRule"/>
</dbReference>
<dbReference type="GO" id="GO:0000028">
    <property type="term" value="P:ribosomal small subunit assembly"/>
    <property type="evidence" value="ECO:0000318"/>
    <property type="project" value="GO_Central"/>
</dbReference>
<dbReference type="CDD" id="cd04163">
    <property type="entry name" value="Era"/>
    <property type="match status" value="1"/>
</dbReference>
<dbReference type="CDD" id="cd22534">
    <property type="entry name" value="KH-II_Era"/>
    <property type="match status" value="1"/>
</dbReference>
<dbReference type="FunFam" id="3.30.300.20:FF:000003">
    <property type="entry name" value="GTPase Era"/>
    <property type="match status" value="1"/>
</dbReference>
<dbReference type="FunFam" id="3.40.50.300:FF:000094">
    <property type="entry name" value="GTPase Era"/>
    <property type="match status" value="1"/>
</dbReference>
<dbReference type="Gene3D" id="3.30.300.20">
    <property type="match status" value="1"/>
</dbReference>
<dbReference type="Gene3D" id="3.40.50.300">
    <property type="entry name" value="P-loop containing nucleotide triphosphate hydrolases"/>
    <property type="match status" value="1"/>
</dbReference>
<dbReference type="HAMAP" id="MF_00367">
    <property type="entry name" value="GTPase_Era"/>
    <property type="match status" value="1"/>
</dbReference>
<dbReference type="InterPro" id="IPR030388">
    <property type="entry name" value="G_ERA_dom"/>
</dbReference>
<dbReference type="InterPro" id="IPR006073">
    <property type="entry name" value="GTP-bd"/>
</dbReference>
<dbReference type="InterPro" id="IPR005662">
    <property type="entry name" value="GTPase_Era-like"/>
</dbReference>
<dbReference type="InterPro" id="IPR015946">
    <property type="entry name" value="KH_dom-like_a/b"/>
</dbReference>
<dbReference type="InterPro" id="IPR004044">
    <property type="entry name" value="KH_dom_type_2"/>
</dbReference>
<dbReference type="InterPro" id="IPR009019">
    <property type="entry name" value="KH_sf_prok-type"/>
</dbReference>
<dbReference type="InterPro" id="IPR027417">
    <property type="entry name" value="P-loop_NTPase"/>
</dbReference>
<dbReference type="InterPro" id="IPR005225">
    <property type="entry name" value="Small_GTP-bd"/>
</dbReference>
<dbReference type="NCBIfam" id="TIGR00436">
    <property type="entry name" value="era"/>
    <property type="match status" value="1"/>
</dbReference>
<dbReference type="NCBIfam" id="NF000908">
    <property type="entry name" value="PRK00089.1"/>
    <property type="match status" value="1"/>
</dbReference>
<dbReference type="NCBIfam" id="TIGR00231">
    <property type="entry name" value="small_GTP"/>
    <property type="match status" value="1"/>
</dbReference>
<dbReference type="PANTHER" id="PTHR42698">
    <property type="entry name" value="GTPASE ERA"/>
    <property type="match status" value="1"/>
</dbReference>
<dbReference type="PANTHER" id="PTHR42698:SF1">
    <property type="entry name" value="GTPASE ERA, MITOCHONDRIAL"/>
    <property type="match status" value="1"/>
</dbReference>
<dbReference type="Pfam" id="PF07650">
    <property type="entry name" value="KH_2"/>
    <property type="match status" value="1"/>
</dbReference>
<dbReference type="Pfam" id="PF01926">
    <property type="entry name" value="MMR_HSR1"/>
    <property type="match status" value="1"/>
</dbReference>
<dbReference type="SUPFAM" id="SSF52540">
    <property type="entry name" value="P-loop containing nucleoside triphosphate hydrolases"/>
    <property type="match status" value="1"/>
</dbReference>
<dbReference type="SUPFAM" id="SSF54814">
    <property type="entry name" value="Prokaryotic type KH domain (KH-domain type II)"/>
    <property type="match status" value="1"/>
</dbReference>
<dbReference type="PROSITE" id="PS51713">
    <property type="entry name" value="G_ERA"/>
    <property type="match status" value="1"/>
</dbReference>
<dbReference type="PROSITE" id="PS50823">
    <property type="entry name" value="KH_TYPE_2"/>
    <property type="match status" value="1"/>
</dbReference>
<organism>
    <name type="scientific">Clostridium botulinum (strain Hall / ATCC 3502 / NCTC 13319 / Type A)</name>
    <dbReference type="NCBI Taxonomy" id="441771"/>
    <lineage>
        <taxon>Bacteria</taxon>
        <taxon>Bacillati</taxon>
        <taxon>Bacillota</taxon>
        <taxon>Clostridia</taxon>
        <taxon>Eubacteriales</taxon>
        <taxon>Clostridiaceae</taxon>
        <taxon>Clostridium</taxon>
    </lineage>
</organism>
<keyword id="KW-1003">Cell membrane</keyword>
<keyword id="KW-0963">Cytoplasm</keyword>
<keyword id="KW-0342">GTP-binding</keyword>
<keyword id="KW-0472">Membrane</keyword>
<keyword id="KW-0547">Nucleotide-binding</keyword>
<keyword id="KW-1185">Reference proteome</keyword>
<keyword id="KW-0690">Ribosome biogenesis</keyword>
<keyword id="KW-0694">RNA-binding</keyword>
<keyword id="KW-0699">rRNA-binding</keyword>
<gene>
    <name evidence="1" type="primary">era</name>
    <name type="ordered locus">CBO2946</name>
    <name type="ordered locus">CLC_2841</name>
</gene>
<feature type="chain" id="PRO_1000121311" description="GTPase Era">
    <location>
        <begin position="1"/>
        <end position="296"/>
    </location>
</feature>
<feature type="domain" description="Era-type G" evidence="2">
    <location>
        <begin position="3"/>
        <end position="170"/>
    </location>
</feature>
<feature type="domain" description="KH type-2" evidence="1">
    <location>
        <begin position="201"/>
        <end position="278"/>
    </location>
</feature>
<feature type="region of interest" description="G1" evidence="2">
    <location>
        <begin position="11"/>
        <end position="18"/>
    </location>
</feature>
<feature type="region of interest" description="G2" evidence="2">
    <location>
        <begin position="37"/>
        <end position="41"/>
    </location>
</feature>
<feature type="region of interest" description="G3" evidence="2">
    <location>
        <begin position="58"/>
        <end position="61"/>
    </location>
</feature>
<feature type="region of interest" description="G4" evidence="2">
    <location>
        <begin position="120"/>
        <end position="123"/>
    </location>
</feature>
<feature type="region of interest" description="G5" evidence="2">
    <location>
        <begin position="149"/>
        <end position="151"/>
    </location>
</feature>
<feature type="binding site" evidence="1">
    <location>
        <begin position="11"/>
        <end position="18"/>
    </location>
    <ligand>
        <name>GTP</name>
        <dbReference type="ChEBI" id="CHEBI:37565"/>
    </ligand>
</feature>
<feature type="binding site" evidence="1">
    <location>
        <begin position="58"/>
        <end position="62"/>
    </location>
    <ligand>
        <name>GTP</name>
        <dbReference type="ChEBI" id="CHEBI:37565"/>
    </ligand>
</feature>
<feature type="binding site" evidence="1">
    <location>
        <begin position="120"/>
        <end position="123"/>
    </location>
    <ligand>
        <name>GTP</name>
        <dbReference type="ChEBI" id="CHEBI:37565"/>
    </ligand>
</feature>
<accession>A5I626</accession>
<accession>A7G7A9</accession>
<proteinExistence type="inferred from homology"/>
<evidence type="ECO:0000255" key="1">
    <source>
        <dbReference type="HAMAP-Rule" id="MF_00367"/>
    </source>
</evidence>
<evidence type="ECO:0000255" key="2">
    <source>
        <dbReference type="PROSITE-ProRule" id="PRU01050"/>
    </source>
</evidence>
<comment type="function">
    <text evidence="1">An essential GTPase that binds both GDP and GTP, with rapid nucleotide exchange. Plays a role in 16S rRNA processing and 30S ribosomal subunit biogenesis and possibly also in cell cycle regulation and energy metabolism.</text>
</comment>
<comment type="subunit">
    <text evidence="1">Monomer.</text>
</comment>
<comment type="subcellular location">
    <subcellularLocation>
        <location>Cytoplasm</location>
    </subcellularLocation>
    <subcellularLocation>
        <location evidence="1">Cell membrane</location>
        <topology evidence="1">Peripheral membrane protein</topology>
    </subcellularLocation>
</comment>
<comment type="similarity">
    <text evidence="1 2">Belongs to the TRAFAC class TrmE-Era-EngA-EngB-Septin-like GTPase superfamily. Era GTPase family.</text>
</comment>
<reference key="1">
    <citation type="journal article" date="2007" name="Genome Res.">
        <title>Genome sequence of a proteolytic (Group I) Clostridium botulinum strain Hall A and comparative analysis of the clostridial genomes.</title>
        <authorList>
            <person name="Sebaihia M."/>
            <person name="Peck M.W."/>
            <person name="Minton N.P."/>
            <person name="Thomson N.R."/>
            <person name="Holden M.T.G."/>
            <person name="Mitchell W.J."/>
            <person name="Carter A.T."/>
            <person name="Bentley S.D."/>
            <person name="Mason D.R."/>
            <person name="Crossman L."/>
            <person name="Paul C.J."/>
            <person name="Ivens A."/>
            <person name="Wells-Bennik M.H.J."/>
            <person name="Davis I.J."/>
            <person name="Cerdeno-Tarraga A.M."/>
            <person name="Churcher C."/>
            <person name="Quail M.A."/>
            <person name="Chillingworth T."/>
            <person name="Feltwell T."/>
            <person name="Fraser A."/>
            <person name="Goodhead I."/>
            <person name="Hance Z."/>
            <person name="Jagels K."/>
            <person name="Larke N."/>
            <person name="Maddison M."/>
            <person name="Moule S."/>
            <person name="Mungall K."/>
            <person name="Norbertczak H."/>
            <person name="Rabbinowitsch E."/>
            <person name="Sanders M."/>
            <person name="Simmonds M."/>
            <person name="White B."/>
            <person name="Whithead S."/>
            <person name="Parkhill J."/>
        </authorList>
    </citation>
    <scope>NUCLEOTIDE SEQUENCE [LARGE SCALE GENOMIC DNA]</scope>
    <source>
        <strain>Hall / ATCC 3502 / NCTC 13319 / Type A</strain>
    </source>
</reference>
<reference key="2">
    <citation type="journal article" date="2007" name="PLoS ONE">
        <title>Analysis of the neurotoxin complex genes in Clostridium botulinum A1-A4 and B1 strains: BoNT/A3, /Ba4 and /B1 clusters are located within plasmids.</title>
        <authorList>
            <person name="Smith T.J."/>
            <person name="Hill K.K."/>
            <person name="Foley B.T."/>
            <person name="Detter J.C."/>
            <person name="Munk A.C."/>
            <person name="Bruce D.C."/>
            <person name="Doggett N.A."/>
            <person name="Smith L.A."/>
            <person name="Marks J.D."/>
            <person name="Xie G."/>
            <person name="Brettin T.S."/>
        </authorList>
    </citation>
    <scope>NUCLEOTIDE SEQUENCE [LARGE SCALE GENOMIC DNA]</scope>
    <source>
        <strain>Hall / ATCC 3502 / NCTC 13319 / Type A</strain>
    </source>
</reference>